<protein>
    <recommendedName>
        <fullName>Flagellin B3</fullName>
    </recommendedName>
</protein>
<organism>
    <name type="scientific">Halobacterium salinarum (strain ATCC 700922 / JCM 11081 / NRC-1)</name>
    <name type="common">Halobacterium halobium</name>
    <dbReference type="NCBI Taxonomy" id="64091"/>
    <lineage>
        <taxon>Archaea</taxon>
        <taxon>Methanobacteriati</taxon>
        <taxon>Methanobacteriota</taxon>
        <taxon>Stenosarchaea group</taxon>
        <taxon>Halobacteria</taxon>
        <taxon>Halobacteriales</taxon>
        <taxon>Halobacteriaceae</taxon>
        <taxon>Halobacterium</taxon>
        <taxon>Halobacterium salinarum NRC-34001</taxon>
    </lineage>
</organism>
<accession>P13078</accession>
<accession>Q9HQX4</accession>
<keyword id="KW-0974">Archaeal flagellum</keyword>
<keyword id="KW-0325">Glycoprotein</keyword>
<keyword id="KW-1185">Reference proteome</keyword>
<proteinExistence type="inferred from homology"/>
<sequence length="193" mass="20521">MFEFITDEDERGQVGIGTLIVFIAMVLVAAIAAGVLINTAGYLQSKGSATGEEASAQVSNRINIVSAYGNVNSEKVDYVNLTVRQAAGADNINLTKSTIQWIGPDKATTLTYSSNSPSSLGENFTTESIKGNNADVLVEQSDRIKVIMYASGVSSTLGSGEEVQLTVTTQYGSKTTYWAHVPESLKDKNAVKL</sequence>
<comment type="function">
    <text>Flagellin is the subunit protein which polymerizes to form the filaments of archaeal flagella.</text>
</comment>
<comment type="subcellular location">
    <subcellularLocation>
        <location>Archaeal flagellum</location>
    </subcellularLocation>
</comment>
<comment type="PTM">
    <text>Glycosylated.</text>
</comment>
<comment type="similarity">
    <text evidence="2">Belongs to the archaeal flagellin family.</text>
</comment>
<comment type="sequence caution" evidence="2">
    <conflict type="erroneous initiation">
        <sequence resource="EMBL-CDS" id="AAG19385"/>
    </conflict>
</comment>
<gene>
    <name type="primary">flaB3</name>
    <name type="ordered locus">VNG_0962G</name>
</gene>
<name>FLAB3_HALSA</name>
<feature type="propeptide" id="PRO_0000009371" evidence="1">
    <location>
        <begin position="1"/>
        <end position="12"/>
    </location>
</feature>
<feature type="chain" id="PRO_0000009372" description="Flagellin B3">
    <location>
        <begin position="13"/>
        <end position="193"/>
    </location>
</feature>
<dbReference type="EMBL" id="M19884">
    <property type="protein sequence ID" value="AAA72645.1"/>
    <property type="molecule type" value="Genomic_DNA"/>
</dbReference>
<dbReference type="EMBL" id="AE004437">
    <property type="protein sequence ID" value="AAG19385.1"/>
    <property type="status" value="ALT_INIT"/>
    <property type="molecule type" value="Genomic_DNA"/>
</dbReference>
<dbReference type="PIR" id="E28944">
    <property type="entry name" value="E28944"/>
</dbReference>
<dbReference type="PIR" id="E84252">
    <property type="entry name" value="E84252"/>
</dbReference>
<dbReference type="RefSeq" id="WP_012289251.1">
    <property type="nucleotide sequence ID" value="NC_002607.1"/>
</dbReference>
<dbReference type="SMR" id="P13078"/>
<dbReference type="FunCoup" id="P13078">
    <property type="interactions" value="2"/>
</dbReference>
<dbReference type="KEGG" id="hal:VNG_0962G"/>
<dbReference type="PATRIC" id="fig|64091.14.peg.740"/>
<dbReference type="HOGENOM" id="CLU_051124_1_0_2"/>
<dbReference type="InParanoid" id="P13078"/>
<dbReference type="OrthoDB" id="102632at2157"/>
<dbReference type="PhylomeDB" id="P13078"/>
<dbReference type="Proteomes" id="UP000000554">
    <property type="component" value="Chromosome"/>
</dbReference>
<dbReference type="GO" id="GO:0097589">
    <property type="term" value="C:archaeal-type flagellum"/>
    <property type="evidence" value="ECO:0007669"/>
    <property type="project" value="UniProtKB-SubCell"/>
</dbReference>
<dbReference type="GO" id="GO:0005198">
    <property type="term" value="F:structural molecule activity"/>
    <property type="evidence" value="ECO:0007669"/>
    <property type="project" value="InterPro"/>
</dbReference>
<dbReference type="GO" id="GO:0097588">
    <property type="term" value="P:archaeal or bacterial-type flagellum-dependent cell motility"/>
    <property type="evidence" value="ECO:0007669"/>
    <property type="project" value="InterPro"/>
</dbReference>
<dbReference type="InterPro" id="IPR013373">
    <property type="entry name" value="Flagellin/pilin_N_arc"/>
</dbReference>
<dbReference type="InterPro" id="IPR002774">
    <property type="entry name" value="Flagellin_arc"/>
</dbReference>
<dbReference type="NCBIfam" id="TIGR02537">
    <property type="entry name" value="arch_flag_Nterm"/>
    <property type="match status" value="1"/>
</dbReference>
<dbReference type="PANTHER" id="PTHR35903">
    <property type="entry name" value="FLAGELLIN B1"/>
    <property type="match status" value="1"/>
</dbReference>
<dbReference type="PANTHER" id="PTHR35903:SF1">
    <property type="entry name" value="FLAGELLIN B1"/>
    <property type="match status" value="1"/>
</dbReference>
<dbReference type="Pfam" id="PF01917">
    <property type="entry name" value="Arch_flagellin"/>
    <property type="match status" value="1"/>
</dbReference>
<reference key="1">
    <citation type="journal article" date="1988" name="J. Biol. Chem.">
        <title>Halobacterial flagellins are encoded by a multigene family. Characterization of five flagellin genes.</title>
        <authorList>
            <person name="Gerl L."/>
            <person name="Sumper M."/>
        </authorList>
    </citation>
    <scope>NUCLEOTIDE SEQUENCE [GENOMIC DNA]</scope>
</reference>
<reference key="2">
    <citation type="journal article" date="2000" name="Proc. Natl. Acad. Sci. U.S.A.">
        <title>Genome sequence of Halobacterium species NRC-1.</title>
        <authorList>
            <person name="Ng W.V."/>
            <person name="Kennedy S.P."/>
            <person name="Mahairas G.G."/>
            <person name="Berquist B."/>
            <person name="Pan M."/>
            <person name="Shukla H.D."/>
            <person name="Lasky S.R."/>
            <person name="Baliga N.S."/>
            <person name="Thorsson V."/>
            <person name="Sbrogna J."/>
            <person name="Swartzell S."/>
            <person name="Weir D."/>
            <person name="Hall J."/>
            <person name="Dahl T.A."/>
            <person name="Welti R."/>
            <person name="Goo Y.A."/>
            <person name="Leithauser B."/>
            <person name="Keller K."/>
            <person name="Cruz R."/>
            <person name="Danson M.J."/>
            <person name="Hough D.W."/>
            <person name="Maddocks D.G."/>
            <person name="Jablonski P.E."/>
            <person name="Krebs M.P."/>
            <person name="Angevine C.M."/>
            <person name="Dale H."/>
            <person name="Isenbarger T.A."/>
            <person name="Peck R.F."/>
            <person name="Pohlschroder M."/>
            <person name="Spudich J.L."/>
            <person name="Jung K.-H."/>
            <person name="Alam M."/>
            <person name="Freitas T."/>
            <person name="Hou S."/>
            <person name="Daniels C.J."/>
            <person name="Dennis P.P."/>
            <person name="Omer A.D."/>
            <person name="Ebhardt H."/>
            <person name="Lowe T.M."/>
            <person name="Liang P."/>
            <person name="Riley M."/>
            <person name="Hood L."/>
            <person name="DasSarma S."/>
        </authorList>
    </citation>
    <scope>NUCLEOTIDE SEQUENCE [LARGE SCALE GENOMIC DNA]</scope>
    <source>
        <strain>ATCC 700922 / JCM 11081 / NRC-1</strain>
    </source>
</reference>
<evidence type="ECO:0000255" key="1"/>
<evidence type="ECO:0000305" key="2"/>